<reference key="1">
    <citation type="journal article" date="2015" name="ChemBioChem">
        <title>The cremeomycin biosynthetic gene cluster encodes a pathway for diazo formation.</title>
        <authorList>
            <person name="Waldman A.J."/>
            <person name="Pechersky Y."/>
            <person name="Wang P."/>
            <person name="Wang J.X."/>
            <person name="Balskus E.P."/>
        </authorList>
    </citation>
    <scope>NUCLEOTIDE SEQUENCE [GENOMIC DNA]</scope>
    <scope>FUNCTION</scope>
    <source>
        <strain>ATCC 19744 / DSM 40147 / JCM 4362 / NBRC 12760 / NRRL 3241 / INA 815/54</strain>
    </source>
</reference>
<reference key="2">
    <citation type="journal article" date="2016" name="Nat. Chem. Biol.">
        <title>A nitrous acid biosynthetic pathway for diazo group formation in bacteria.</title>
        <authorList>
            <person name="Sugai Y."/>
            <person name="Katsuyama Y."/>
            <person name="Ohnishi Y."/>
        </authorList>
    </citation>
    <scope>NUCLEOTIDE SEQUENCE [GENOMIC DNA]</scope>
    <scope>FUNCTION</scope>
    <source>
        <strain>ATCC 19744 / DSM 40147 / JCM 4362 / NBRC 12760 / NRRL 3241 / INA 815/54</strain>
    </source>
</reference>
<reference key="3">
    <citation type="journal article" date="2018" name="J. Org. Chem.">
        <title>Discovery of a diazo-forming enzyme in cremeomycin biosynthesis.</title>
        <authorList>
            <person name="Waldman A.J."/>
            <person name="Balskus E.P."/>
        </authorList>
    </citation>
    <scope>FUNCTION</scope>
    <scope>CATALYTIC ACTIVITY</scope>
    <scope>MUTAGENESIS OF GLU-352</scope>
</reference>
<dbReference type="EC" id="6.7.1.1" evidence="4"/>
<dbReference type="EMBL" id="KT381192">
    <property type="protein sequence ID" value="ALA99210.1"/>
    <property type="molecule type" value="Genomic_DNA"/>
</dbReference>
<dbReference type="EMBL" id="LC033425">
    <property type="protein sequence ID" value="BAU09310.1"/>
    <property type="molecule type" value="Genomic_DNA"/>
</dbReference>
<dbReference type="RefSeq" id="WP_345228828.1">
    <property type="nucleotide sequence ID" value="NZ_BAAAXE010000015.1"/>
</dbReference>
<dbReference type="SMR" id="A0A0K2JLU1"/>
<dbReference type="KEGG" id="ag:ALA99210"/>
<dbReference type="BioCyc" id="MetaCyc:MONOMER-21761"/>
<dbReference type="GO" id="GO:0005524">
    <property type="term" value="F:ATP binding"/>
    <property type="evidence" value="ECO:0007669"/>
    <property type="project" value="UniProtKB-KW"/>
</dbReference>
<dbReference type="GO" id="GO:0016874">
    <property type="term" value="F:ligase activity"/>
    <property type="evidence" value="ECO:0007669"/>
    <property type="project" value="UniProtKB-KW"/>
</dbReference>
<dbReference type="GO" id="GO:0017000">
    <property type="term" value="P:antibiotic biosynthetic process"/>
    <property type="evidence" value="ECO:0007669"/>
    <property type="project" value="UniProtKB-KW"/>
</dbReference>
<dbReference type="Gene3D" id="3.40.50.12780">
    <property type="entry name" value="N-terminal domain of ligase-like"/>
    <property type="match status" value="1"/>
</dbReference>
<dbReference type="InterPro" id="IPR020845">
    <property type="entry name" value="AMP-binding_CS"/>
</dbReference>
<dbReference type="InterPro" id="IPR000873">
    <property type="entry name" value="AMP-dep_synth/lig_dom"/>
</dbReference>
<dbReference type="InterPro" id="IPR042099">
    <property type="entry name" value="ANL_N_sf"/>
</dbReference>
<dbReference type="InterPro" id="IPR050237">
    <property type="entry name" value="ATP-dep_AMP-bd_enzyme"/>
</dbReference>
<dbReference type="PANTHER" id="PTHR43767">
    <property type="entry name" value="LONG-CHAIN-FATTY-ACID--COA LIGASE"/>
    <property type="match status" value="1"/>
</dbReference>
<dbReference type="PANTHER" id="PTHR43767:SF1">
    <property type="entry name" value="NONRIBOSOMAL PEPTIDE SYNTHASE PES1 (EUROFUNG)-RELATED"/>
    <property type="match status" value="1"/>
</dbReference>
<dbReference type="Pfam" id="PF00501">
    <property type="entry name" value="AMP-binding"/>
    <property type="match status" value="1"/>
</dbReference>
<dbReference type="SUPFAM" id="SSF56801">
    <property type="entry name" value="Acetyl-CoA synthetase-like"/>
    <property type="match status" value="1"/>
</dbReference>
<dbReference type="PROSITE" id="PS00455">
    <property type="entry name" value="AMP_BINDING"/>
    <property type="match status" value="1"/>
</dbReference>
<organism>
    <name type="scientific">Streptomyces cremeus</name>
    <dbReference type="NCBI Taxonomy" id="66881"/>
    <lineage>
        <taxon>Bacteria</taxon>
        <taxon>Bacillati</taxon>
        <taxon>Actinomycetota</taxon>
        <taxon>Actinomycetes</taxon>
        <taxon>Kitasatosporales</taxon>
        <taxon>Streptomycetaceae</taxon>
        <taxon>Streptomyces</taxon>
    </lineage>
</organism>
<comment type="function">
    <text evidence="2 3 4">Part of a gene cluster involved in the biosynthesis of cremeomycin, a light-sensitive o-diazoquinone with antibacterial and antiproliferative effects (PubMed:26278892, PubMed:26689788, PubMed:29771512). Catalyzes the last step of cremeomycin biosynthesis, the diazotization of 3-amino-2-hydroxy-4-methoxybenzoate (3,2,4-AHMBA) with nitrite to generate cremeomycin (PubMed:29771512).</text>
</comment>
<comment type="catalytic activity">
    <reaction evidence="4">
        <text>3-amino-2-hydroxy-4-methoxybenzoate + nitrite + ATP = cremeomycin + AMP + diphosphate + H2O</text>
        <dbReference type="Rhea" id="RHEA:69004"/>
        <dbReference type="ChEBI" id="CHEBI:15377"/>
        <dbReference type="ChEBI" id="CHEBI:16301"/>
        <dbReference type="ChEBI" id="CHEBI:30616"/>
        <dbReference type="ChEBI" id="CHEBI:33019"/>
        <dbReference type="ChEBI" id="CHEBI:180662"/>
        <dbReference type="ChEBI" id="CHEBI:180678"/>
        <dbReference type="ChEBI" id="CHEBI:456215"/>
        <dbReference type="EC" id="6.7.1.1"/>
    </reaction>
    <physiologicalReaction direction="left-to-right" evidence="4">
        <dbReference type="Rhea" id="RHEA:69005"/>
    </physiologicalReaction>
</comment>
<comment type="pathway">
    <text evidence="7 8 9">Antibiotic biosynthesis.</text>
</comment>
<comment type="similarity">
    <text evidence="6">Belongs to the ATP-dependent AMP-binding enzyme family.</text>
</comment>
<keyword id="KW-0045">Antibiotic biosynthesis</keyword>
<keyword id="KW-0067">ATP-binding</keyword>
<keyword id="KW-0436">Ligase</keyword>
<keyword id="KW-0547">Nucleotide-binding</keyword>
<gene>
    <name evidence="5" type="primary">creM</name>
</gene>
<proteinExistence type="evidence at protein level"/>
<accession>A0A0K2JLU1</accession>
<feature type="chain" id="PRO_0000457477" description="3-amino-2-hydroxy-4-methoxybenzoate diazotase">
    <location>
        <begin position="1"/>
        <end position="553"/>
    </location>
</feature>
<feature type="region of interest" description="Disordered" evidence="1">
    <location>
        <begin position="157"/>
        <end position="178"/>
    </location>
</feature>
<feature type="compositionally biased region" description="Low complexity" evidence="1">
    <location>
        <begin position="157"/>
        <end position="167"/>
    </location>
</feature>
<feature type="mutagenesis site" description="Loss of activity, cannot form cremeomycin." evidence="4">
    <original>E</original>
    <variation>A</variation>
    <location>
        <position position="352"/>
    </location>
</feature>
<evidence type="ECO:0000256" key="1">
    <source>
        <dbReference type="SAM" id="MobiDB-lite"/>
    </source>
</evidence>
<evidence type="ECO:0000269" key="2">
    <source>
    </source>
</evidence>
<evidence type="ECO:0000269" key="3">
    <source>
    </source>
</evidence>
<evidence type="ECO:0000269" key="4">
    <source>
    </source>
</evidence>
<evidence type="ECO:0000303" key="5">
    <source>
    </source>
</evidence>
<evidence type="ECO:0000305" key="6"/>
<evidence type="ECO:0000305" key="7">
    <source>
    </source>
</evidence>
<evidence type="ECO:0000305" key="8">
    <source>
    </source>
</evidence>
<evidence type="ECO:0000305" key="9">
    <source>
    </source>
</evidence>
<protein>
    <recommendedName>
        <fullName evidence="6">3-amino-2-hydroxy-4-methoxybenzoate diazotase</fullName>
        <ecNumber evidence="4">6.7.1.1</ecNumber>
    </recommendedName>
</protein>
<name>CREM_STRCM</name>
<sequence length="553" mass="60427">MHALLRRVTRGNGFYIGDLFHAAAGHDATTPVTLDQPLQYAPELGTRFTVGQLAEQTDELAARLWAAGVRPTERVALYKKDNFDIALHACAAARIGAVPALLSPALEAPVVRTLLDRLDGPWLLTDATTLAGPLGTVLAPASVRAVLLTTGTPAEGALPAAGATGPAREGDAPPPAPVVRLADHRGAPKRPPVFLHPRQPSLITHSSGTTGVPKLAVHCPEAGWHRLVPQKVVSWPIRGKEKAALCMTFVHSRFYQGLAMFLSHGNPMLIAVDPDPSRIGPLFARERPGYIETHPNTYVDWEALADAPGEPLAGVRVFGATFDAMHPRTIQRMLGASRRTRPLFVQFYGQSEIGPMAGRWYTRRSAARMNGRCVGLPLPGFISLRVVDDAGKRLRGGRTGHLEVRSRTRILTYLGEDQRYAEQLHDGWWRVGDMGRRDRWGLLHLLDREVDRIGDLESSLAVEDLLMSRLEELREVVLVPGADGEPVPVVATVDESPLDAARWQRATSDLPTMAPVRQFRFEDLPRTSTRKIQKPELARLIQGVRATDQGVGA</sequence>